<accession>P32964</accession>
<feature type="chain" id="PRO_0000204048" description="Cyanide hydratase">
    <location>
        <begin position="1"/>
        <end position="368"/>
    </location>
</feature>
<feature type="domain" description="CN hydrolase" evidence="2">
    <location>
        <begin position="6"/>
        <end position="285"/>
    </location>
</feature>
<feature type="region of interest" description="Disordered" evidence="3">
    <location>
        <begin position="341"/>
        <end position="368"/>
    </location>
</feature>
<feature type="active site" description="Proton acceptor" evidence="1">
    <location>
        <position position="46"/>
    </location>
</feature>
<feature type="active site" evidence="1">
    <location>
        <position position="128"/>
    </location>
</feature>
<feature type="active site" description="Nucleophile" evidence="1">
    <location>
        <position position="163"/>
    </location>
</feature>
<dbReference type="EC" id="4.2.1.66" evidence="1 5"/>
<dbReference type="EMBL" id="M99044">
    <property type="protein sequence ID" value="AAA33353.1"/>
    <property type="molecule type" value="Genomic_DNA"/>
</dbReference>
<dbReference type="PIR" id="JQ1613">
    <property type="entry name" value="JQ1613"/>
</dbReference>
<dbReference type="SMR" id="P32964"/>
<dbReference type="BioCyc" id="MetaCyc:MONOMER-17777"/>
<dbReference type="BRENDA" id="4.2.1.66">
    <property type="organism ID" value="2449"/>
</dbReference>
<dbReference type="PHI-base" id="PHI:143"/>
<dbReference type="GO" id="GO:0030196">
    <property type="term" value="F:cyanide hydratase activity"/>
    <property type="evidence" value="ECO:0007669"/>
    <property type="project" value="UniProtKB-UniRule"/>
</dbReference>
<dbReference type="GO" id="GO:0000257">
    <property type="term" value="F:nitrilase activity"/>
    <property type="evidence" value="ECO:0007669"/>
    <property type="project" value="UniProtKB-ARBA"/>
</dbReference>
<dbReference type="GO" id="GO:0019500">
    <property type="term" value="P:cyanide catabolic process"/>
    <property type="evidence" value="ECO:0007669"/>
    <property type="project" value="UniProtKB-UniRule"/>
</dbReference>
<dbReference type="CDD" id="cd07564">
    <property type="entry name" value="nitrilases_CHs"/>
    <property type="match status" value="1"/>
</dbReference>
<dbReference type="FunFam" id="3.60.110.10:FF:000011">
    <property type="entry name" value="Cyanide hydratase"/>
    <property type="match status" value="1"/>
</dbReference>
<dbReference type="Gene3D" id="3.60.110.10">
    <property type="entry name" value="Carbon-nitrogen hydrolase"/>
    <property type="match status" value="1"/>
</dbReference>
<dbReference type="HAMAP" id="MF_03224">
    <property type="entry name" value="CN_hydrolase"/>
    <property type="match status" value="1"/>
</dbReference>
<dbReference type="InterPro" id="IPR003010">
    <property type="entry name" value="C-N_Hydrolase"/>
</dbReference>
<dbReference type="InterPro" id="IPR036526">
    <property type="entry name" value="C-N_Hydrolase_sf"/>
</dbReference>
<dbReference type="InterPro" id="IPR037544">
    <property type="entry name" value="CN_hydrolase"/>
</dbReference>
<dbReference type="InterPro" id="IPR000132">
    <property type="entry name" value="Nitrilase/CN_hydratase_CS"/>
</dbReference>
<dbReference type="InterPro" id="IPR044149">
    <property type="entry name" value="Nitrilases_CHs"/>
</dbReference>
<dbReference type="PANTHER" id="PTHR46044:SF4">
    <property type="entry name" value="CYANIDE HYDRATASE"/>
    <property type="match status" value="1"/>
</dbReference>
<dbReference type="PANTHER" id="PTHR46044">
    <property type="entry name" value="NITRILASE"/>
    <property type="match status" value="1"/>
</dbReference>
<dbReference type="Pfam" id="PF00795">
    <property type="entry name" value="CN_hydrolase"/>
    <property type="match status" value="1"/>
</dbReference>
<dbReference type="SUPFAM" id="SSF56317">
    <property type="entry name" value="Carbon-nitrogen hydrolase"/>
    <property type="match status" value="1"/>
</dbReference>
<dbReference type="PROSITE" id="PS50263">
    <property type="entry name" value="CN_HYDROLASE"/>
    <property type="match status" value="1"/>
</dbReference>
<dbReference type="PROSITE" id="PS00920">
    <property type="entry name" value="NITRIL_CHT_1"/>
    <property type="match status" value="1"/>
</dbReference>
<dbReference type="PROSITE" id="PS00921">
    <property type="entry name" value="NITRIL_CHT_2"/>
    <property type="match status" value="1"/>
</dbReference>
<reference key="1">
    <citation type="journal article" date="1992" name="Biochem. Biophys. Res. Commun.">
        <title>Cloning and properties of a cyanide hydratase gene from the phytopathogenic fungus Gloeocercospora sorghi.</title>
        <authorList>
            <person name="Wang P."/>
            <person name="van Etten H.D."/>
        </authorList>
    </citation>
    <scope>NUCLEOTIDE SEQUENCE [GENOMIC DNA]</scope>
    <source>
        <strain>T-442</strain>
    </source>
</reference>
<reference key="2">
    <citation type="journal article" date="1992" name="Arch. Biochem. Biophys.">
        <title>Purification and characterization of cyanide hydratase from the phytopathogenic fungus Gloeocercospora sorghi.</title>
        <authorList>
            <person name="Wang P."/>
            <person name="Matthews D.E."/>
            <person name="VanEtten H.D."/>
        </authorList>
    </citation>
    <scope>FUNCTION</scope>
    <scope>CATALYTIC ACTIVITY</scope>
    <scope>BIOPHYSICOCHEMICAL PROPERTIES</scope>
    <source>
        <strain>T-442</strain>
    </source>
</reference>
<reference key="3">
    <citation type="journal article" date="1999" name="Fungal Genet. Biol.">
        <title>Disruption of the cyanide hydratase gene in Gloeocercospora sorghi increases its sensitivity to the phytoanticipin cyanide but does not affect its pathogenicity on the cyanogenic plant sorghum.</title>
        <authorList>
            <person name="Wang P."/>
            <person name="Sandrock R.W."/>
            <person name="VanEtten H.D."/>
        </authorList>
    </citation>
    <scope>DISRUPTION PHENOTYPE</scope>
    <source>
        <strain>T-442</strain>
    </source>
</reference>
<reference key="4">
    <citation type="journal article" date="2005" name="Appl. Microbiol. Biotechnol.">
        <title>Comparison of cyanide-degrading nitrilases.</title>
        <authorList>
            <person name="Jandhyala D.M."/>
            <person name="Willson R.C."/>
            <person name="Sewell B.T."/>
            <person name="Benedik M.J."/>
        </authorList>
    </citation>
    <scope>CATALYTIC ACTIVITY</scope>
    <scope>BIOPHYSICOCHEMICAL PROPERTIES</scope>
</reference>
<reference key="5">
    <citation type="journal article" date="2008" name="Appl. Microbiol. Biotechnol.">
        <title>Genome mining of cyanide-degrading nitrilases from filamentous fungi.</title>
        <authorList>
            <person name="Basile L.J."/>
            <person name="Willson R.C."/>
            <person name="Sewell B.T."/>
            <person name="Benedik M.J."/>
        </authorList>
    </citation>
    <scope>FUNCTION</scope>
    <scope>CATALYTIC ACTIVITY</scope>
    <scope>BIOPHYSICOCHEMICAL PROPERTIES</scope>
</reference>
<evidence type="ECO:0000255" key="1">
    <source>
        <dbReference type="HAMAP-Rule" id="MF_03224"/>
    </source>
</evidence>
<evidence type="ECO:0000255" key="2">
    <source>
        <dbReference type="PROSITE-ProRule" id="PRU00054"/>
    </source>
</evidence>
<evidence type="ECO:0000256" key="3">
    <source>
        <dbReference type="SAM" id="MobiDB-lite"/>
    </source>
</evidence>
<evidence type="ECO:0000269" key="4">
    <source>
    </source>
</evidence>
<evidence type="ECO:0000269" key="5">
    <source>
    </source>
</evidence>
<evidence type="ECO:0000269" key="6">
    <source>
    </source>
</evidence>
<evidence type="ECO:0000269" key="7">
    <source>
    </source>
</evidence>
<evidence type="ECO:0000303" key="8">
    <source>
    </source>
</evidence>
<evidence type="ECO:0000303" key="9">
    <source>
    </source>
</evidence>
<evidence type="ECO:0000305" key="10"/>
<proteinExistence type="evidence at protein level"/>
<name>CHT_MICSH</name>
<protein>
    <recommendedName>
        <fullName evidence="1 8">Cyanide hydratase</fullName>
        <shortName evidence="1 8">CHT</shortName>
        <ecNumber evidence="1 5">4.2.1.66</ecNumber>
    </recommendedName>
    <alternativeName>
        <fullName evidence="1">Cyanide-degrading nitrilase</fullName>
    </alternativeName>
    <alternativeName>
        <fullName evidence="1">Formamide hydrolyase</fullName>
    </alternativeName>
</protein>
<organism>
    <name type="scientific">Microdochium sorghi</name>
    <name type="common">Zonate leaf spot disease fungus</name>
    <name type="synonym">Gloeocercospora sorghi</name>
    <dbReference type="NCBI Taxonomy" id="1682391"/>
    <lineage>
        <taxon>Eukaryota</taxon>
        <taxon>Fungi</taxon>
        <taxon>Dikarya</taxon>
        <taxon>Ascomycota</taxon>
        <taxon>Pezizomycotina</taxon>
        <taxon>Sordariomycetes</taxon>
        <taxon>Xylariomycetidae</taxon>
        <taxon>Xylariales</taxon>
        <taxon>Microdochiaceae</taxon>
        <taxon>Microdochium</taxon>
    </lineage>
</organism>
<comment type="function">
    <text evidence="1 5">Catalyzes the hydration of cyanide to formamide. Degradation of cyanide may be important for plant pathogenic fungi in infection of cyanogenic plants.</text>
</comment>
<comment type="catalytic activity">
    <reaction evidence="1 5">
        <text>formamide = hydrogen cyanide + H2O</text>
        <dbReference type="Rhea" id="RHEA:21720"/>
        <dbReference type="ChEBI" id="CHEBI:15377"/>
        <dbReference type="ChEBI" id="CHEBI:16397"/>
        <dbReference type="ChEBI" id="CHEBI:18407"/>
        <dbReference type="EC" id="4.2.1.66"/>
    </reaction>
</comment>
<comment type="biophysicochemical properties">
    <kinetics>
        <KM evidence="5">12 mM for cyanide (at pH 8 and 25 degrees Celsium)</KM>
        <KM evidence="6">90 mM for cyanide (at pH 7.8 and 23 degrees Celsium)</KM>
        <Vmax evidence="6">4.4 mmol/min/mg enzyme</Vmax>
    </kinetics>
    <phDependence>
        <text evidence="5 6 7">Optimum pH is 7-8 (PubMed:1416986, PubMed:15703908). Active from pH 6 to pH 8.5 (PubMed:15703908, PubMed:18587571).</text>
    </phDependence>
    <temperatureDependence>
        <text evidence="6">Optimum temperature is 42-55 degrees Celsius.</text>
    </temperatureDependence>
</comment>
<comment type="subunit">
    <text evidence="1">Oligomer of dimers, forming left-handed helical fibers.</text>
</comment>
<comment type="induction">
    <text evidence="1">By cyanide.</text>
</comment>
<comment type="disruption phenotype">
    <text evidence="4">Highly sensitive to cyanide, but retains virulence on sorghum.</text>
</comment>
<comment type="similarity">
    <text evidence="1 10">Belongs to the carbon-nitrogen hydrolase superfamily. Nitrilase family.</text>
</comment>
<gene>
    <name evidence="9" type="primary">cht</name>
</gene>
<keyword id="KW-0378">Hydrolase</keyword>
<keyword id="KW-0456">Lyase</keyword>
<sequence length="368" mass="40899">MPINKYKAAVVTSEPVWENLEGGVVKTIEFINEAGKAGCKLIAFPEVWIPGYPYWMWKVNYLQSLPMLKAYRENSIAMDSSEMRRIRAAARDNQIYVSIGVSEIDHATLYLTQVLISPLGDVINHRRKIKPTHVEKLVYGDGSGDSFEPVTQTEIGRLGQLNCWENMNPFLKSLAVARGEQIHVAAWPVYPDLSKQVHPDPATNYADPASDLVTPAYAIETGTWVLAPFQRISVEGLKRHTPPGVEPETDATPYNGHARIFRPDGSLYAKPAVDFDGLMYVDIDLNESHLTKALADFAGHYMRPDLIRLLVDTRRKELVTEVGGGDNGGIQSYSTMARLGLDRPLEEEDYRQGTDAGETEKASSNGHA</sequence>